<protein>
    <recommendedName>
        <fullName>TraK lipoprotein</fullName>
    </recommendedName>
</protein>
<accession>P41066</accession>
<name>TRAK1_ECOLI</name>
<sequence length="242" mass="25627">MRKNNTAIIFGSLFFSCSVMAANGTLAPTVVPMVNGGQASIAISNTSPNLFTVPGDRIIAVNSLDGALTNNEQTASGGVVVATVNKKPFTFILETERGLNLSIQAVPREGAGRTIQLVSDLRGTGEEAGAWETSTPYESLLVTISQAVRGGKLPAGWYQVPVTKETLQAPAGLSSVADAVWTGNHLKMVRFAVENKTLSALNIRESDFWQPGTRAVMFSQPASQLLAGARMDVYVIRDGEGN</sequence>
<keyword id="KW-0998">Cell outer membrane</keyword>
<keyword id="KW-0184">Conjugation</keyword>
<keyword id="KW-0449">Lipoprotein</keyword>
<keyword id="KW-0472">Membrane</keyword>
<keyword id="KW-0564">Palmitate</keyword>
<keyword id="KW-0614">Plasmid</keyword>
<keyword id="KW-0732">Signal</keyword>
<organism>
    <name type="scientific">Escherichia coli (strain K12)</name>
    <dbReference type="NCBI Taxonomy" id="83333"/>
    <lineage>
        <taxon>Bacteria</taxon>
        <taxon>Pseudomonadati</taxon>
        <taxon>Pseudomonadota</taxon>
        <taxon>Gammaproteobacteria</taxon>
        <taxon>Enterobacterales</taxon>
        <taxon>Enterobacteriaceae</taxon>
        <taxon>Escherichia</taxon>
    </lineage>
</organism>
<geneLocation type="plasmid">
    <name>F</name>
</geneLocation>
<reference key="1">
    <citation type="journal article" date="1994" name="Microbiol. Rev.">
        <title>Analysis of the sequence and gene products of the transfer region of the F sex factor.</title>
        <authorList>
            <person name="Frost L.S."/>
            <person name="Ippen-Ihler K."/>
            <person name="Skurray R.A."/>
        </authorList>
    </citation>
    <scope>NUCLEOTIDE SEQUENCE [GENOMIC DNA]</scope>
</reference>
<reference key="2">
    <citation type="submission" date="2000-04" db="EMBL/GenBank/DDBJ databases">
        <title>Complete nucleotide sequence of the F plasmid: its implications for organization and diversification of plasmid genomes.</title>
        <authorList>
            <person name="Shimizu H."/>
            <person name="Saitoh Y."/>
            <person name="Suda Y."/>
            <person name="Uehara K."/>
            <person name="Sampei G."/>
            <person name="Mizobuchi K."/>
        </authorList>
    </citation>
    <scope>NUCLEOTIDE SEQUENCE [LARGE SCALE GENOMIC DNA]</scope>
    <source>
        <strain>K12 / CR63</strain>
    </source>
</reference>
<feature type="signal peptide" evidence="1">
    <location>
        <begin position="1"/>
        <end position="16"/>
    </location>
</feature>
<feature type="chain" id="PRO_0000024506" description="TraK lipoprotein">
    <location>
        <begin position="17"/>
        <end position="242"/>
    </location>
</feature>
<feature type="lipid moiety-binding region" description="N-palmitoyl cysteine" evidence="1">
    <location>
        <position position="17"/>
    </location>
</feature>
<feature type="lipid moiety-binding region" description="S-diacylglycerol cysteine" evidence="1">
    <location>
        <position position="17"/>
    </location>
</feature>
<evidence type="ECO:0000255" key="1">
    <source>
        <dbReference type="PROSITE-ProRule" id="PRU00303"/>
    </source>
</evidence>
<evidence type="ECO:0000305" key="2"/>
<dbReference type="EMBL" id="U01159">
    <property type="protein sequence ID" value="AAC44189.1"/>
    <property type="molecule type" value="Genomic_DNA"/>
</dbReference>
<dbReference type="EMBL" id="AP001918">
    <property type="protein sequence ID" value="BAA97947.1"/>
    <property type="molecule type" value="Genomic_DNA"/>
</dbReference>
<dbReference type="RefSeq" id="NP_061456.1">
    <property type="nucleotide sequence ID" value="NC_002483.1"/>
</dbReference>
<dbReference type="RefSeq" id="NP_862922.1">
    <property type="nucleotide sequence ID" value="NC_004998.1"/>
</dbReference>
<dbReference type="RefSeq" id="WP_001230787.1">
    <property type="nucleotide sequence ID" value="NZ_SSZK01000064.1"/>
</dbReference>
<dbReference type="RefSeq" id="YP_001965445.1">
    <property type="nucleotide sequence ID" value="NC_010862.1"/>
</dbReference>
<dbReference type="RefSeq" id="YP_003108305.1">
    <property type="nucleotide sequence ID" value="NC_013122.1"/>
</dbReference>
<dbReference type="RefSeq" id="YP_003162580.1">
    <property type="nucleotide sequence ID" value="NC_013175.1"/>
</dbReference>
<dbReference type="RefSeq" id="YP_006953523.1">
    <property type="nucleotide sequence ID" value="NC_019073.1"/>
</dbReference>
<dbReference type="RefSeq" id="YP_008997955.1">
    <property type="nucleotide sequence ID" value="NC_023315.1"/>
</dbReference>
<dbReference type="RefSeq" id="YP_009060153.1">
    <property type="nucleotide sequence ID" value="NC_024956.1"/>
</dbReference>
<dbReference type="RefSeq" id="YP_009068348.1">
    <property type="nucleotide sequence ID" value="NC_025139.1"/>
</dbReference>
<dbReference type="RefSeq" id="YP_009068621.1">
    <property type="nucleotide sequence ID" value="NC_025141.1"/>
</dbReference>
<dbReference type="RefSeq" id="YP_009070613.1">
    <property type="nucleotide sequence ID" value="NC_025175.1"/>
</dbReference>
<dbReference type="RefSeq" id="YP_009070970.1">
    <property type="nucleotide sequence ID" value="NC_025177.1"/>
</dbReference>
<dbReference type="RefSeq" id="YP_009071233.1">
    <property type="nucleotide sequence ID" value="NC_025179.1"/>
</dbReference>
<dbReference type="RefSeq" id="YP_190141.1">
    <property type="nucleotide sequence ID" value="NC_006671.1"/>
</dbReference>
<dbReference type="SMR" id="P41066"/>
<dbReference type="DIP" id="DIP-16928N"/>
<dbReference type="GeneID" id="75203837"/>
<dbReference type="KEGG" id="ecoc:C3026_24490"/>
<dbReference type="PATRIC" id="fig|83333.107.peg.636"/>
<dbReference type="PRO" id="PR:P41066"/>
<dbReference type="GO" id="GO:0009279">
    <property type="term" value="C:cell outer membrane"/>
    <property type="evidence" value="ECO:0007669"/>
    <property type="project" value="UniProtKB-SubCell"/>
</dbReference>
<dbReference type="InterPro" id="IPR055397">
    <property type="entry name" value="TraK_C"/>
</dbReference>
<dbReference type="InterPro" id="IPR014126">
    <property type="entry name" value="TraK_Ftype"/>
</dbReference>
<dbReference type="InterPro" id="IPR010563">
    <property type="entry name" value="TraK_N"/>
</dbReference>
<dbReference type="NCBIfam" id="NF010296">
    <property type="entry name" value="PRK13736.1"/>
    <property type="match status" value="1"/>
</dbReference>
<dbReference type="NCBIfam" id="TIGR02756">
    <property type="entry name" value="TraK_Ftype"/>
    <property type="match status" value="1"/>
</dbReference>
<dbReference type="Pfam" id="PF23536">
    <property type="entry name" value="TraK_C"/>
    <property type="match status" value="1"/>
</dbReference>
<dbReference type="Pfam" id="PF06586">
    <property type="entry name" value="TraK_N"/>
    <property type="match status" value="1"/>
</dbReference>
<dbReference type="PROSITE" id="PS51257">
    <property type="entry name" value="PROKAR_LIPOPROTEIN"/>
    <property type="match status" value="1"/>
</dbReference>
<gene>
    <name type="primary">traK</name>
    <name type="ordered locus">ECOK12F077</name>
</gene>
<proteinExistence type="inferred from homology"/>
<comment type="function">
    <text>Involved in pilus assembly.</text>
</comment>
<comment type="subcellular location">
    <subcellularLocation>
        <location evidence="2">Cell outer membrane</location>
        <topology evidence="1">Lipid-anchor</topology>
    </subcellularLocation>
</comment>